<gene>
    <name type="primary">UBC30</name>
    <name type="ordered locus">At5g56150</name>
    <name type="ORF">MDA7.21</name>
</gene>
<name>UBC30_ARATH</name>
<comment type="function">
    <text>Accepts the ubiquitin from the E1 complex and catalyzes its covalent attachment to other proteins.</text>
</comment>
<comment type="catalytic activity">
    <reaction evidence="1 2">
        <text>S-ubiquitinyl-[E1 ubiquitin-activating enzyme]-L-cysteine + [E2 ubiquitin-conjugating enzyme]-L-cysteine = [E1 ubiquitin-activating enzyme]-L-cysteine + S-ubiquitinyl-[E2 ubiquitin-conjugating enzyme]-L-cysteine.</text>
        <dbReference type="EC" id="2.3.2.23"/>
    </reaction>
</comment>
<comment type="pathway">
    <text evidence="1">Protein modification; protein ubiquitination.</text>
</comment>
<comment type="subunit">
    <text evidence="4">Interacts with RGLG3 and RGLG4.</text>
</comment>
<comment type="tissue specificity">
    <text evidence="3">Ubiquitously expressed at very low levels.</text>
</comment>
<comment type="similarity">
    <text evidence="1">Belongs to the ubiquitin-conjugating enzyme family.</text>
</comment>
<sequence length="148" mass="16480">MASKRINKELRDLQRDPPVSCSAGPTGDDMFQWQATIMGPADSPFAGGVFLVTIHFPPDYPFKPPKVAFRTKVYHPNINSNGSICLDILKEQWSPALTVSKVLLSICSLLTDPNPDDPLVPEIAHIYKTDRVKYESTAQSWTQKYAMG</sequence>
<evidence type="ECO:0000255" key="1">
    <source>
        <dbReference type="PROSITE-ProRule" id="PRU00388"/>
    </source>
</evidence>
<evidence type="ECO:0000255" key="2">
    <source>
        <dbReference type="PROSITE-ProRule" id="PRU10133"/>
    </source>
</evidence>
<evidence type="ECO:0000269" key="3">
    <source>
    </source>
</evidence>
<evidence type="ECO:0000269" key="4">
    <source>
    </source>
</evidence>
<accession>Q9FKT3</accession>
<reference key="1">
    <citation type="journal article" date="2005" name="Plant Physiol.">
        <title>Genome analysis and functional characterization of the E2 and RING-type E3 ligase ubiquitination enzymes of Arabidopsis.</title>
        <authorList>
            <person name="Kraft E."/>
            <person name="Stone S.L."/>
            <person name="Ma L."/>
            <person name="Su N."/>
            <person name="Gao Y."/>
            <person name="Lau O.-S."/>
            <person name="Deng X.-W."/>
            <person name="Callis J."/>
        </authorList>
    </citation>
    <scope>NUCLEOTIDE SEQUENCE [MRNA]</scope>
    <scope>TISSUE SPECIFICITY</scope>
    <scope>GENE FAMILY</scope>
    <scope>NOMENCLATURE</scope>
</reference>
<reference key="2">
    <citation type="journal article" date="1998" name="DNA Res.">
        <title>Structural analysis of Arabidopsis thaliana chromosome 5. V. Sequence features of the regions of 1,381,565 bp covered by twenty one physically assigned P1 and TAC clones.</title>
        <authorList>
            <person name="Kaneko T."/>
            <person name="Kotani H."/>
            <person name="Nakamura Y."/>
            <person name="Sato S."/>
            <person name="Asamizu E."/>
            <person name="Miyajima N."/>
            <person name="Tabata S."/>
        </authorList>
    </citation>
    <scope>NUCLEOTIDE SEQUENCE [LARGE SCALE GENOMIC DNA]</scope>
    <source>
        <strain>cv. Columbia</strain>
    </source>
</reference>
<reference key="3">
    <citation type="journal article" date="2017" name="Plant J.">
        <title>Araport11: a complete reannotation of the Arabidopsis thaliana reference genome.</title>
        <authorList>
            <person name="Cheng C.Y."/>
            <person name="Krishnakumar V."/>
            <person name="Chan A.P."/>
            <person name="Thibaud-Nissen F."/>
            <person name="Schobel S."/>
            <person name="Town C.D."/>
        </authorList>
    </citation>
    <scope>GENOME REANNOTATION</scope>
    <source>
        <strain>cv. Columbia</strain>
    </source>
</reference>
<reference key="4">
    <citation type="journal article" date="2003" name="Science">
        <title>Empirical analysis of transcriptional activity in the Arabidopsis genome.</title>
        <authorList>
            <person name="Yamada K."/>
            <person name="Lim J."/>
            <person name="Dale J.M."/>
            <person name="Chen H."/>
            <person name="Shinn P."/>
            <person name="Palm C.J."/>
            <person name="Southwick A.M."/>
            <person name="Wu H.C."/>
            <person name="Kim C.J."/>
            <person name="Nguyen M."/>
            <person name="Pham P.K."/>
            <person name="Cheuk R.F."/>
            <person name="Karlin-Newmann G."/>
            <person name="Liu S.X."/>
            <person name="Lam B."/>
            <person name="Sakano H."/>
            <person name="Wu T."/>
            <person name="Yu G."/>
            <person name="Miranda M."/>
            <person name="Quach H.L."/>
            <person name="Tripp M."/>
            <person name="Chang C.H."/>
            <person name="Lee J.M."/>
            <person name="Toriumi M.J."/>
            <person name="Chan M.M."/>
            <person name="Tang C.C."/>
            <person name="Onodera C.S."/>
            <person name="Deng J.M."/>
            <person name="Akiyama K."/>
            <person name="Ansari Y."/>
            <person name="Arakawa T."/>
            <person name="Banh J."/>
            <person name="Banno F."/>
            <person name="Bowser L."/>
            <person name="Brooks S.Y."/>
            <person name="Carninci P."/>
            <person name="Chao Q."/>
            <person name="Choy N."/>
            <person name="Enju A."/>
            <person name="Goldsmith A.D."/>
            <person name="Gurjal M."/>
            <person name="Hansen N.F."/>
            <person name="Hayashizaki Y."/>
            <person name="Johnson-Hopson C."/>
            <person name="Hsuan V.W."/>
            <person name="Iida K."/>
            <person name="Karnes M."/>
            <person name="Khan S."/>
            <person name="Koesema E."/>
            <person name="Ishida J."/>
            <person name="Jiang P.X."/>
            <person name="Jones T."/>
            <person name="Kawai J."/>
            <person name="Kamiya A."/>
            <person name="Meyers C."/>
            <person name="Nakajima M."/>
            <person name="Narusaka M."/>
            <person name="Seki M."/>
            <person name="Sakurai T."/>
            <person name="Satou M."/>
            <person name="Tamse R."/>
            <person name="Vaysberg M."/>
            <person name="Wallender E.K."/>
            <person name="Wong C."/>
            <person name="Yamamura Y."/>
            <person name="Yuan S."/>
            <person name="Shinozaki K."/>
            <person name="Davis R.W."/>
            <person name="Theologis A."/>
            <person name="Ecker J.R."/>
        </authorList>
    </citation>
    <scope>NUCLEOTIDE SEQUENCE [LARGE SCALE MRNA]</scope>
    <source>
        <strain>cv. Columbia</strain>
    </source>
</reference>
<reference key="5">
    <citation type="submission" date="2002-03" db="EMBL/GenBank/DDBJ databases">
        <title>Full-length cDNA from Arabidopsis thaliana.</title>
        <authorList>
            <person name="Brover V.V."/>
            <person name="Troukhan M.E."/>
            <person name="Alexandrov N.A."/>
            <person name="Lu Y.-P."/>
            <person name="Flavell R.B."/>
            <person name="Feldmann K.A."/>
        </authorList>
    </citation>
    <scope>NUCLEOTIDE SEQUENCE [LARGE SCALE MRNA]</scope>
</reference>
<reference key="6">
    <citation type="journal article" date="2016" name="Plant Cell Physiol.">
        <title>The Arabidopsis iron-sulfur protein GRXS17 is a target of the ubiquitin E3 ligases RGLG3 and RGLG4.</title>
        <authorList>
            <person name="Nagels Durand A."/>
            <person name="Inigo S."/>
            <person name="Ritter A."/>
            <person name="Iniesto E."/>
            <person name="De Clercq R."/>
            <person name="Staes A."/>
            <person name="Van Leene J."/>
            <person name="Rubio V."/>
            <person name="Gevaert K."/>
            <person name="De Jaeger G."/>
            <person name="Pauwels L."/>
            <person name="Goossens A."/>
        </authorList>
    </citation>
    <scope>INTERACTION WITH RGLG3 AND RGLG4</scope>
</reference>
<organism>
    <name type="scientific">Arabidopsis thaliana</name>
    <name type="common">Mouse-ear cress</name>
    <dbReference type="NCBI Taxonomy" id="3702"/>
    <lineage>
        <taxon>Eukaryota</taxon>
        <taxon>Viridiplantae</taxon>
        <taxon>Streptophyta</taxon>
        <taxon>Embryophyta</taxon>
        <taxon>Tracheophyta</taxon>
        <taxon>Spermatophyta</taxon>
        <taxon>Magnoliopsida</taxon>
        <taxon>eudicotyledons</taxon>
        <taxon>Gunneridae</taxon>
        <taxon>Pentapetalae</taxon>
        <taxon>rosids</taxon>
        <taxon>malvids</taxon>
        <taxon>Brassicales</taxon>
        <taxon>Brassicaceae</taxon>
        <taxon>Camelineae</taxon>
        <taxon>Arabidopsis</taxon>
    </lineage>
</organism>
<feature type="chain" id="PRO_0000345195" description="Ubiquitin-conjugating enzyme E2 30">
    <location>
        <begin position="1"/>
        <end position="148"/>
    </location>
</feature>
<feature type="domain" description="UBC core" evidence="1">
    <location>
        <begin position="1"/>
        <end position="147"/>
    </location>
</feature>
<feature type="active site" description="Glycyl thioester intermediate" evidence="1 2">
    <location>
        <position position="85"/>
    </location>
</feature>
<keyword id="KW-0067">ATP-binding</keyword>
<keyword id="KW-0547">Nucleotide-binding</keyword>
<keyword id="KW-1185">Reference proteome</keyword>
<keyword id="KW-0808">Transferase</keyword>
<keyword id="KW-0833">Ubl conjugation pathway</keyword>
<protein>
    <recommendedName>
        <fullName>Ubiquitin-conjugating enzyme E2 30</fullName>
        <ecNumber>2.3.2.23</ecNumber>
    </recommendedName>
    <alternativeName>
        <fullName>E2 ubiquitin-conjugating enzyme 30</fullName>
    </alternativeName>
    <alternativeName>
        <fullName>Ubiquitin carrier protein 30</fullName>
    </alternativeName>
</protein>
<proteinExistence type="evidence at protein level"/>
<dbReference type="EC" id="2.3.2.23"/>
<dbReference type="EMBL" id="DQ027043">
    <property type="protein sequence ID" value="AAY44869.1"/>
    <property type="molecule type" value="mRNA"/>
</dbReference>
<dbReference type="EMBL" id="AB011476">
    <property type="protein sequence ID" value="BAB09297.1"/>
    <property type="molecule type" value="Genomic_DNA"/>
</dbReference>
<dbReference type="EMBL" id="CP002688">
    <property type="protein sequence ID" value="AED96726.1"/>
    <property type="molecule type" value="Genomic_DNA"/>
</dbReference>
<dbReference type="EMBL" id="AY059806">
    <property type="protein sequence ID" value="AAL24288.1"/>
    <property type="molecule type" value="mRNA"/>
</dbReference>
<dbReference type="EMBL" id="AY081511">
    <property type="protein sequence ID" value="AAM10073.1"/>
    <property type="molecule type" value="mRNA"/>
</dbReference>
<dbReference type="EMBL" id="AY084220">
    <property type="protein sequence ID" value="AAM60821.1"/>
    <property type="molecule type" value="mRNA"/>
</dbReference>
<dbReference type="RefSeq" id="NP_851198.1">
    <property type="nucleotide sequence ID" value="NM_180867.3"/>
</dbReference>
<dbReference type="SMR" id="Q9FKT3"/>
<dbReference type="BioGRID" id="20958">
    <property type="interactions" value="4"/>
</dbReference>
<dbReference type="FunCoup" id="Q9FKT3">
    <property type="interactions" value="3547"/>
</dbReference>
<dbReference type="STRING" id="3702.Q9FKT3"/>
<dbReference type="GlyGen" id="Q9FKT3">
    <property type="glycosylation" value="1 site"/>
</dbReference>
<dbReference type="PaxDb" id="3702-AT5G56150.1"/>
<dbReference type="ProteomicsDB" id="243217"/>
<dbReference type="EnsemblPlants" id="AT5G56150.1">
    <property type="protein sequence ID" value="AT5G56150.1"/>
    <property type="gene ID" value="AT5G56150"/>
</dbReference>
<dbReference type="GeneID" id="835714"/>
<dbReference type="Gramene" id="AT5G56150.1">
    <property type="protein sequence ID" value="AT5G56150.1"/>
    <property type="gene ID" value="AT5G56150"/>
</dbReference>
<dbReference type="KEGG" id="ath:AT5G56150"/>
<dbReference type="Araport" id="AT5G56150"/>
<dbReference type="TAIR" id="AT5G56150">
    <property type="gene designation" value="UBC30"/>
</dbReference>
<dbReference type="eggNOG" id="KOG0417">
    <property type="taxonomic scope" value="Eukaryota"/>
</dbReference>
<dbReference type="HOGENOM" id="CLU_030988_13_3_1"/>
<dbReference type="InParanoid" id="Q9FKT3"/>
<dbReference type="OMA" id="ITNMSHT"/>
<dbReference type="OrthoDB" id="7851174at2759"/>
<dbReference type="PhylomeDB" id="Q9FKT3"/>
<dbReference type="UniPathway" id="UPA00143"/>
<dbReference type="PRO" id="PR:Q9FKT3"/>
<dbReference type="Proteomes" id="UP000006548">
    <property type="component" value="Chromosome 5"/>
</dbReference>
<dbReference type="ExpressionAtlas" id="Q9FKT3">
    <property type="expression patterns" value="baseline and differential"/>
</dbReference>
<dbReference type="GO" id="GO:0005524">
    <property type="term" value="F:ATP binding"/>
    <property type="evidence" value="ECO:0007669"/>
    <property type="project" value="UniProtKB-KW"/>
</dbReference>
<dbReference type="GO" id="GO:0061631">
    <property type="term" value="F:ubiquitin conjugating enzyme activity"/>
    <property type="evidence" value="ECO:0007669"/>
    <property type="project" value="UniProtKB-EC"/>
</dbReference>
<dbReference type="GO" id="GO:0004842">
    <property type="term" value="F:ubiquitin-protein transferase activity"/>
    <property type="evidence" value="ECO:0000314"/>
    <property type="project" value="TAIR"/>
</dbReference>
<dbReference type="GO" id="GO:0016567">
    <property type="term" value="P:protein ubiquitination"/>
    <property type="evidence" value="ECO:0007669"/>
    <property type="project" value="UniProtKB-UniPathway"/>
</dbReference>
<dbReference type="GO" id="GO:0006511">
    <property type="term" value="P:ubiquitin-dependent protein catabolic process"/>
    <property type="evidence" value="ECO:0000314"/>
    <property type="project" value="TAIR"/>
</dbReference>
<dbReference type="CDD" id="cd23792">
    <property type="entry name" value="UBCc_UBE2D"/>
    <property type="match status" value="1"/>
</dbReference>
<dbReference type="FunFam" id="3.10.110.10:FF:000001">
    <property type="entry name" value="Ubiquitin-conjugating enzyme 28, E2"/>
    <property type="match status" value="1"/>
</dbReference>
<dbReference type="Gene3D" id="3.10.110.10">
    <property type="entry name" value="Ubiquitin Conjugating Enzyme"/>
    <property type="match status" value="1"/>
</dbReference>
<dbReference type="InterPro" id="IPR000608">
    <property type="entry name" value="UBQ-conjugat_E2_core"/>
</dbReference>
<dbReference type="InterPro" id="IPR023313">
    <property type="entry name" value="UBQ-conjugating_AS"/>
</dbReference>
<dbReference type="InterPro" id="IPR016135">
    <property type="entry name" value="UBQ-conjugating_enzyme/RWD"/>
</dbReference>
<dbReference type="PANTHER" id="PTHR24068">
    <property type="entry name" value="UBIQUITIN-CONJUGATING ENZYME E2"/>
    <property type="match status" value="1"/>
</dbReference>
<dbReference type="Pfam" id="PF00179">
    <property type="entry name" value="UQ_con"/>
    <property type="match status" value="1"/>
</dbReference>
<dbReference type="SMART" id="SM00212">
    <property type="entry name" value="UBCc"/>
    <property type="match status" value="1"/>
</dbReference>
<dbReference type="SUPFAM" id="SSF54495">
    <property type="entry name" value="UBC-like"/>
    <property type="match status" value="1"/>
</dbReference>
<dbReference type="PROSITE" id="PS00183">
    <property type="entry name" value="UBC_1"/>
    <property type="match status" value="1"/>
</dbReference>
<dbReference type="PROSITE" id="PS50127">
    <property type="entry name" value="UBC_2"/>
    <property type="match status" value="1"/>
</dbReference>